<reference key="1">
    <citation type="journal article" date="2008" name="PLoS Genet.">
        <title>Complete genome sequence of the complex carbohydrate-degrading marine bacterium, Saccharophagus degradans strain 2-40 T.</title>
        <authorList>
            <person name="Weiner R.M."/>
            <person name="Taylor L.E. II"/>
            <person name="Henrissat B."/>
            <person name="Hauser L."/>
            <person name="Land M."/>
            <person name="Coutinho P.M."/>
            <person name="Rancurel C."/>
            <person name="Saunders E.H."/>
            <person name="Longmire A.G."/>
            <person name="Zhang H."/>
            <person name="Bayer E.A."/>
            <person name="Gilbert H.J."/>
            <person name="Larimer F."/>
            <person name="Zhulin I.B."/>
            <person name="Ekborg N.A."/>
            <person name="Lamed R."/>
            <person name="Richardson P.M."/>
            <person name="Borovok I."/>
            <person name="Hutcheson S."/>
        </authorList>
    </citation>
    <scope>NUCLEOTIDE SEQUENCE [LARGE SCALE GENOMIC DNA]</scope>
    <source>
        <strain>2-40 / ATCC 43961 / DSM 17024</strain>
    </source>
</reference>
<accession>Q21DY7</accession>
<evidence type="ECO:0000255" key="1">
    <source>
        <dbReference type="HAMAP-Rule" id="MF_01635"/>
    </source>
</evidence>
<comment type="function">
    <text evidence="1">Catalyzes the prenylation of para-hydroxybenzoate (PHB) with an all-trans polyprenyl group. Mediates the second step in the final reaction sequence of ubiquinone-8 (UQ-8) biosynthesis, which is the condensation of the polyisoprenoid side chain with PHB, generating the first membrane-bound Q intermediate 3-octaprenyl-4-hydroxybenzoate.</text>
</comment>
<comment type="catalytic activity">
    <reaction evidence="1">
        <text>all-trans-octaprenyl diphosphate + 4-hydroxybenzoate = 4-hydroxy-3-(all-trans-octaprenyl)benzoate + diphosphate</text>
        <dbReference type="Rhea" id="RHEA:27782"/>
        <dbReference type="ChEBI" id="CHEBI:1617"/>
        <dbReference type="ChEBI" id="CHEBI:17879"/>
        <dbReference type="ChEBI" id="CHEBI:33019"/>
        <dbReference type="ChEBI" id="CHEBI:57711"/>
        <dbReference type="EC" id="2.5.1.39"/>
    </reaction>
</comment>
<comment type="cofactor">
    <cofactor evidence="1">
        <name>Mg(2+)</name>
        <dbReference type="ChEBI" id="CHEBI:18420"/>
    </cofactor>
</comment>
<comment type="pathway">
    <text evidence="1">Cofactor biosynthesis; ubiquinone biosynthesis.</text>
</comment>
<comment type="subcellular location">
    <subcellularLocation>
        <location evidence="1">Cell inner membrane</location>
        <topology evidence="1">Multi-pass membrane protein</topology>
    </subcellularLocation>
</comment>
<comment type="similarity">
    <text evidence="1">Belongs to the UbiA prenyltransferase family.</text>
</comment>
<organism>
    <name type="scientific">Saccharophagus degradans (strain 2-40 / ATCC 43961 / DSM 17024)</name>
    <dbReference type="NCBI Taxonomy" id="203122"/>
    <lineage>
        <taxon>Bacteria</taxon>
        <taxon>Pseudomonadati</taxon>
        <taxon>Pseudomonadota</taxon>
        <taxon>Gammaproteobacteria</taxon>
        <taxon>Cellvibrionales</taxon>
        <taxon>Cellvibrionaceae</taxon>
        <taxon>Saccharophagus</taxon>
    </lineage>
</organism>
<sequence length="299" mass="33319">MTATRKSTRPSKPLKATLVAYAKLMRLDRPIGIYLVLWPTLWSLWIAADGLPDWDVLVIFVLGVVLMRSAGCVINDFADRKIDGHVRRTANRPLVTGLITPKQAVLFFVALLVIAFILVLFTNPLTIKLSFGGALLAFCYPFMKRYTQLPQIVLGAAFAWSIPMAFAAQTNQLPEAIWVLYTAVVLWTVAYDTFYAMADREDDLKIGVKSTAILFGDQDRIITACLQLMALVAMAMAGERFGLGFSFKVSLLVAGGLFAYQQYLIRNREPNACFRAFLHNNWVGLVVFLGILVDKLITN</sequence>
<name>UBIA_SACD2</name>
<dbReference type="EC" id="2.5.1.39" evidence="1"/>
<dbReference type="EMBL" id="CP000282">
    <property type="protein sequence ID" value="ABD83092.1"/>
    <property type="molecule type" value="Genomic_DNA"/>
</dbReference>
<dbReference type="RefSeq" id="WP_011470307.1">
    <property type="nucleotide sequence ID" value="NC_007912.1"/>
</dbReference>
<dbReference type="SMR" id="Q21DY7"/>
<dbReference type="STRING" id="203122.Sde_3837"/>
<dbReference type="GeneID" id="98615437"/>
<dbReference type="KEGG" id="sde:Sde_3837"/>
<dbReference type="eggNOG" id="COG0382">
    <property type="taxonomic scope" value="Bacteria"/>
</dbReference>
<dbReference type="HOGENOM" id="CLU_034879_1_0_6"/>
<dbReference type="OrthoDB" id="9782418at2"/>
<dbReference type="UniPathway" id="UPA00232"/>
<dbReference type="Proteomes" id="UP000001947">
    <property type="component" value="Chromosome"/>
</dbReference>
<dbReference type="GO" id="GO:0005886">
    <property type="term" value="C:plasma membrane"/>
    <property type="evidence" value="ECO:0007669"/>
    <property type="project" value="UniProtKB-SubCell"/>
</dbReference>
<dbReference type="GO" id="GO:0008412">
    <property type="term" value="F:4-hydroxybenzoate polyprenyltransferase activity"/>
    <property type="evidence" value="ECO:0007669"/>
    <property type="project" value="UniProtKB-UniRule"/>
</dbReference>
<dbReference type="GO" id="GO:0006744">
    <property type="term" value="P:ubiquinone biosynthetic process"/>
    <property type="evidence" value="ECO:0007669"/>
    <property type="project" value="UniProtKB-UniRule"/>
</dbReference>
<dbReference type="CDD" id="cd13959">
    <property type="entry name" value="PT_UbiA_COQ2"/>
    <property type="match status" value="1"/>
</dbReference>
<dbReference type="FunFam" id="1.10.357.140:FF:000002">
    <property type="entry name" value="4-hydroxybenzoate octaprenyltransferase"/>
    <property type="match status" value="1"/>
</dbReference>
<dbReference type="FunFam" id="1.20.120.1780:FF:000001">
    <property type="entry name" value="4-hydroxybenzoate octaprenyltransferase"/>
    <property type="match status" value="1"/>
</dbReference>
<dbReference type="Gene3D" id="1.10.357.140">
    <property type="entry name" value="UbiA prenyltransferase"/>
    <property type="match status" value="1"/>
</dbReference>
<dbReference type="Gene3D" id="1.20.120.1780">
    <property type="entry name" value="UbiA prenyltransferase"/>
    <property type="match status" value="1"/>
</dbReference>
<dbReference type="HAMAP" id="MF_01635">
    <property type="entry name" value="UbiA"/>
    <property type="match status" value="1"/>
</dbReference>
<dbReference type="InterPro" id="IPR006370">
    <property type="entry name" value="HB_polyprenyltransferase-like"/>
</dbReference>
<dbReference type="InterPro" id="IPR039653">
    <property type="entry name" value="Prenyltransferase"/>
</dbReference>
<dbReference type="InterPro" id="IPR000537">
    <property type="entry name" value="UbiA_prenyltransferase"/>
</dbReference>
<dbReference type="InterPro" id="IPR030470">
    <property type="entry name" value="UbiA_prenylTrfase_CS"/>
</dbReference>
<dbReference type="InterPro" id="IPR044878">
    <property type="entry name" value="UbiA_sf"/>
</dbReference>
<dbReference type="NCBIfam" id="TIGR01474">
    <property type="entry name" value="ubiA_proteo"/>
    <property type="match status" value="1"/>
</dbReference>
<dbReference type="PANTHER" id="PTHR11048:SF28">
    <property type="entry name" value="4-HYDROXYBENZOATE POLYPRENYLTRANSFERASE, MITOCHONDRIAL"/>
    <property type="match status" value="1"/>
</dbReference>
<dbReference type="PANTHER" id="PTHR11048">
    <property type="entry name" value="PRENYLTRANSFERASES"/>
    <property type="match status" value="1"/>
</dbReference>
<dbReference type="Pfam" id="PF01040">
    <property type="entry name" value="UbiA"/>
    <property type="match status" value="1"/>
</dbReference>
<dbReference type="PROSITE" id="PS00943">
    <property type="entry name" value="UBIA"/>
    <property type="match status" value="1"/>
</dbReference>
<proteinExistence type="inferred from homology"/>
<feature type="chain" id="PRO_0000262832" description="4-hydroxybenzoate octaprenyltransferase">
    <location>
        <begin position="1"/>
        <end position="299"/>
    </location>
</feature>
<feature type="transmembrane region" description="Helical" evidence="1">
    <location>
        <begin position="31"/>
        <end position="51"/>
    </location>
</feature>
<feature type="transmembrane region" description="Helical" evidence="1">
    <location>
        <begin position="54"/>
        <end position="74"/>
    </location>
</feature>
<feature type="transmembrane region" description="Helical" evidence="1">
    <location>
        <begin position="105"/>
        <end position="125"/>
    </location>
</feature>
<feature type="transmembrane region" description="Helical" evidence="1">
    <location>
        <begin position="148"/>
        <end position="168"/>
    </location>
</feature>
<feature type="transmembrane region" description="Helical" evidence="1">
    <location>
        <begin position="177"/>
        <end position="197"/>
    </location>
</feature>
<feature type="transmembrane region" description="Helical" evidence="1">
    <location>
        <begin position="241"/>
        <end position="261"/>
    </location>
</feature>
<feature type="transmembrane region" description="Helical" evidence="1">
    <location>
        <begin position="277"/>
        <end position="297"/>
    </location>
</feature>
<keyword id="KW-0997">Cell inner membrane</keyword>
<keyword id="KW-1003">Cell membrane</keyword>
<keyword id="KW-0460">Magnesium</keyword>
<keyword id="KW-0472">Membrane</keyword>
<keyword id="KW-1185">Reference proteome</keyword>
<keyword id="KW-0808">Transferase</keyword>
<keyword id="KW-0812">Transmembrane</keyword>
<keyword id="KW-1133">Transmembrane helix</keyword>
<keyword id="KW-0831">Ubiquinone biosynthesis</keyword>
<gene>
    <name evidence="1" type="primary">ubiA</name>
    <name type="ordered locus">Sde_3837</name>
</gene>
<protein>
    <recommendedName>
        <fullName evidence="1">4-hydroxybenzoate octaprenyltransferase</fullName>
        <ecNumber evidence="1">2.5.1.39</ecNumber>
    </recommendedName>
    <alternativeName>
        <fullName evidence="1">4-HB polyprenyltransferase</fullName>
    </alternativeName>
</protein>